<dbReference type="EC" id="2.7.7.6" evidence="1"/>
<dbReference type="EMBL" id="CP000948">
    <property type="protein sequence ID" value="ACB04698.1"/>
    <property type="molecule type" value="Genomic_DNA"/>
</dbReference>
<dbReference type="RefSeq" id="WP_000135058.1">
    <property type="nucleotide sequence ID" value="NC_010473.1"/>
</dbReference>
<dbReference type="EMDB" id="EMD-3580"/>
<dbReference type="SMR" id="B1X982"/>
<dbReference type="GeneID" id="98390719"/>
<dbReference type="KEGG" id="ecd:ECDH10B_3831"/>
<dbReference type="HOGENOM" id="CLU_125406_5_3_6"/>
<dbReference type="GO" id="GO:0000428">
    <property type="term" value="C:DNA-directed RNA polymerase complex"/>
    <property type="evidence" value="ECO:0007669"/>
    <property type="project" value="UniProtKB-KW"/>
</dbReference>
<dbReference type="GO" id="GO:0003677">
    <property type="term" value="F:DNA binding"/>
    <property type="evidence" value="ECO:0007669"/>
    <property type="project" value="UniProtKB-UniRule"/>
</dbReference>
<dbReference type="GO" id="GO:0003899">
    <property type="term" value="F:DNA-directed RNA polymerase activity"/>
    <property type="evidence" value="ECO:0007669"/>
    <property type="project" value="UniProtKB-UniRule"/>
</dbReference>
<dbReference type="GO" id="GO:0006351">
    <property type="term" value="P:DNA-templated transcription"/>
    <property type="evidence" value="ECO:0007669"/>
    <property type="project" value="UniProtKB-UniRule"/>
</dbReference>
<dbReference type="FunFam" id="3.90.940.10:FF:000001">
    <property type="entry name" value="DNA-directed RNA polymerase subunit omega"/>
    <property type="match status" value="1"/>
</dbReference>
<dbReference type="Gene3D" id="3.90.940.10">
    <property type="match status" value="1"/>
</dbReference>
<dbReference type="HAMAP" id="MF_00366">
    <property type="entry name" value="RNApol_bact_RpoZ"/>
    <property type="match status" value="1"/>
</dbReference>
<dbReference type="InterPro" id="IPR003716">
    <property type="entry name" value="DNA-dir_RNA_pol_omega"/>
</dbReference>
<dbReference type="InterPro" id="IPR006110">
    <property type="entry name" value="Pol_omega/Rpo6/RPB6"/>
</dbReference>
<dbReference type="InterPro" id="IPR036161">
    <property type="entry name" value="RPB6/omega-like_sf"/>
</dbReference>
<dbReference type="NCBIfam" id="TIGR00690">
    <property type="entry name" value="rpoZ"/>
    <property type="match status" value="1"/>
</dbReference>
<dbReference type="PANTHER" id="PTHR34476">
    <property type="entry name" value="DNA-DIRECTED RNA POLYMERASE SUBUNIT OMEGA"/>
    <property type="match status" value="1"/>
</dbReference>
<dbReference type="PANTHER" id="PTHR34476:SF1">
    <property type="entry name" value="DNA-DIRECTED RNA POLYMERASE SUBUNIT OMEGA"/>
    <property type="match status" value="1"/>
</dbReference>
<dbReference type="Pfam" id="PF01192">
    <property type="entry name" value="RNA_pol_Rpb6"/>
    <property type="match status" value="1"/>
</dbReference>
<dbReference type="SMART" id="SM01409">
    <property type="entry name" value="RNA_pol_Rpb6"/>
    <property type="match status" value="1"/>
</dbReference>
<dbReference type="SUPFAM" id="SSF63562">
    <property type="entry name" value="RPB6/omega subunit-like"/>
    <property type="match status" value="1"/>
</dbReference>
<evidence type="ECO:0000255" key="1">
    <source>
        <dbReference type="HAMAP-Rule" id="MF_00366"/>
    </source>
</evidence>
<reference key="1">
    <citation type="journal article" date="2008" name="J. Bacteriol.">
        <title>The complete genome sequence of Escherichia coli DH10B: insights into the biology of a laboratory workhorse.</title>
        <authorList>
            <person name="Durfee T."/>
            <person name="Nelson R."/>
            <person name="Baldwin S."/>
            <person name="Plunkett G. III"/>
            <person name="Burland V."/>
            <person name="Mau B."/>
            <person name="Petrosino J.F."/>
            <person name="Qin X."/>
            <person name="Muzny D.M."/>
            <person name="Ayele M."/>
            <person name="Gibbs R.A."/>
            <person name="Csorgo B."/>
            <person name="Posfai G."/>
            <person name="Weinstock G.M."/>
            <person name="Blattner F.R."/>
        </authorList>
    </citation>
    <scope>NUCLEOTIDE SEQUENCE [LARGE SCALE GENOMIC DNA]</scope>
    <source>
        <strain>K12 / DH10B</strain>
    </source>
</reference>
<feature type="chain" id="PRO_1000121219" description="DNA-directed RNA polymerase subunit omega">
    <location>
        <begin position="1"/>
        <end position="91"/>
    </location>
</feature>
<comment type="function">
    <text evidence="1">Promotes RNA polymerase assembly. Latches the N- and C-terminal regions of the beta' subunit thereby facilitating its interaction with the beta and alpha subunits.</text>
</comment>
<comment type="catalytic activity">
    <reaction evidence="1">
        <text>RNA(n) + a ribonucleoside 5'-triphosphate = RNA(n+1) + diphosphate</text>
        <dbReference type="Rhea" id="RHEA:21248"/>
        <dbReference type="Rhea" id="RHEA-COMP:14527"/>
        <dbReference type="Rhea" id="RHEA-COMP:17342"/>
        <dbReference type="ChEBI" id="CHEBI:33019"/>
        <dbReference type="ChEBI" id="CHEBI:61557"/>
        <dbReference type="ChEBI" id="CHEBI:140395"/>
        <dbReference type="EC" id="2.7.7.6"/>
    </reaction>
</comment>
<comment type="subunit">
    <text evidence="1">The RNAP catalytic core consists of 2 alpha, 1 beta, 1 beta' and 1 omega subunit. When a sigma factor is associated with the core the holoenzyme is formed, which can initiate transcription.</text>
</comment>
<comment type="similarity">
    <text evidence="1">Belongs to the RNA polymerase subunit omega family.</text>
</comment>
<name>RPOZ_ECODH</name>
<accession>B1X982</accession>
<protein>
    <recommendedName>
        <fullName evidence="1">DNA-directed RNA polymerase subunit omega</fullName>
        <shortName evidence="1">RNAP omega subunit</shortName>
        <ecNumber evidence="1">2.7.7.6</ecNumber>
    </recommendedName>
    <alternativeName>
        <fullName evidence="1">RNA polymerase omega subunit</fullName>
    </alternativeName>
    <alternativeName>
        <fullName evidence="1">Transcriptase subunit omega</fullName>
    </alternativeName>
</protein>
<gene>
    <name evidence="1" type="primary">rpoZ</name>
    <name type="ordered locus">ECDH10B_3831</name>
</gene>
<keyword id="KW-0240">DNA-directed RNA polymerase</keyword>
<keyword id="KW-0548">Nucleotidyltransferase</keyword>
<keyword id="KW-0804">Transcription</keyword>
<keyword id="KW-0808">Transferase</keyword>
<proteinExistence type="inferred from homology"/>
<sequence length="91" mass="10237">MARVTVQDAVEKIGNRFDLVLVAARRARQMQVGGKDPLVPEENDKTTVIALREIEEGLINNQILDVRERQEQQEQEAAELQAVTAIAEGRR</sequence>
<organism>
    <name type="scientific">Escherichia coli (strain K12 / DH10B)</name>
    <dbReference type="NCBI Taxonomy" id="316385"/>
    <lineage>
        <taxon>Bacteria</taxon>
        <taxon>Pseudomonadati</taxon>
        <taxon>Pseudomonadota</taxon>
        <taxon>Gammaproteobacteria</taxon>
        <taxon>Enterobacterales</taxon>
        <taxon>Enterobacteriaceae</taxon>
        <taxon>Escherichia</taxon>
    </lineage>
</organism>